<comment type="function">
    <text evidence="1">Required for rescue of stalled ribosomes mediated by trans-translation. Binds to transfer-messenger RNA (tmRNA), required for stable association of tmRNA with ribosomes. tmRNA and SmpB together mimic tRNA shape, replacing the anticodon stem-loop with SmpB. tmRNA is encoded by the ssrA gene; the 2 termini fold to resemble tRNA(Ala) and it encodes a 'tag peptide', a short internal open reading frame. During trans-translation Ala-aminoacylated tmRNA acts like a tRNA, entering the A-site of stalled ribosomes, displacing the stalled mRNA. The ribosome then switches to translate the ORF on the tmRNA; the nascent peptide is terminated with the 'tag peptide' encoded by the tmRNA and targeted for degradation. The ribosome is freed to recommence translation, which seems to be the essential function of trans-translation.</text>
</comment>
<comment type="subcellular location">
    <subcellularLocation>
        <location evidence="1">Cytoplasm</location>
    </subcellularLocation>
    <text evidence="1">The tmRNA-SmpB complex associates with stalled 70S ribosomes.</text>
</comment>
<comment type="similarity">
    <text evidence="1">Belongs to the SmpB family.</text>
</comment>
<feature type="chain" id="PRO_0000331085" description="SsrA-binding protein">
    <location>
        <begin position="1"/>
        <end position="157"/>
    </location>
</feature>
<feature type="region of interest" description="Disordered" evidence="2">
    <location>
        <begin position="138"/>
        <end position="157"/>
    </location>
</feature>
<feature type="compositionally biased region" description="Basic and acidic residues" evidence="2">
    <location>
        <begin position="138"/>
        <end position="151"/>
    </location>
</feature>
<proteinExistence type="inferred from homology"/>
<sequence length="157" mass="18169">MVKHSDPNSKLIAENRRARFDYFIEEEIEAGIILMGSEVKSLRQGGSNIGESYASVENGELWLINGYIAPYLQAKTWGHEERRKRKLLVSRRELARLWNATAREGMTIVPIRMYFNDRGIVKLKIGIAKGKKLSDKRATEAKRDWGREKQRLLKQHS</sequence>
<protein>
    <recommendedName>
        <fullName evidence="1">SsrA-binding protein</fullName>
    </recommendedName>
    <alternativeName>
        <fullName evidence="1">Small protein B</fullName>
    </alternativeName>
</protein>
<accession>A4WNS0</accession>
<organism>
    <name type="scientific">Cereibacter sphaeroides (strain ATCC 17025 / ATH 2.4.3)</name>
    <name type="common">Rhodobacter sphaeroides</name>
    <dbReference type="NCBI Taxonomy" id="349102"/>
    <lineage>
        <taxon>Bacteria</taxon>
        <taxon>Pseudomonadati</taxon>
        <taxon>Pseudomonadota</taxon>
        <taxon>Alphaproteobacteria</taxon>
        <taxon>Rhodobacterales</taxon>
        <taxon>Paracoccaceae</taxon>
        <taxon>Cereibacter</taxon>
    </lineage>
</organism>
<name>SSRP_CERS5</name>
<keyword id="KW-0963">Cytoplasm</keyword>
<keyword id="KW-0694">RNA-binding</keyword>
<evidence type="ECO:0000255" key="1">
    <source>
        <dbReference type="HAMAP-Rule" id="MF_00023"/>
    </source>
</evidence>
<evidence type="ECO:0000256" key="2">
    <source>
        <dbReference type="SAM" id="MobiDB-lite"/>
    </source>
</evidence>
<gene>
    <name evidence="1" type="primary">smpB</name>
    <name type="ordered locus">Rsph17025_0123</name>
</gene>
<dbReference type="EMBL" id="CP000661">
    <property type="protein sequence ID" value="ABP69034.1"/>
    <property type="molecule type" value="Genomic_DNA"/>
</dbReference>
<dbReference type="SMR" id="A4WNS0"/>
<dbReference type="STRING" id="349102.Rsph17025_0123"/>
<dbReference type="KEGG" id="rsq:Rsph17025_0123"/>
<dbReference type="eggNOG" id="COG0691">
    <property type="taxonomic scope" value="Bacteria"/>
</dbReference>
<dbReference type="HOGENOM" id="CLU_108953_0_1_5"/>
<dbReference type="BioCyc" id="RSPH349102:G1G8M-124-MONOMER"/>
<dbReference type="GO" id="GO:0005829">
    <property type="term" value="C:cytosol"/>
    <property type="evidence" value="ECO:0007669"/>
    <property type="project" value="TreeGrafter"/>
</dbReference>
<dbReference type="GO" id="GO:0003723">
    <property type="term" value="F:RNA binding"/>
    <property type="evidence" value="ECO:0007669"/>
    <property type="project" value="UniProtKB-UniRule"/>
</dbReference>
<dbReference type="GO" id="GO:0070929">
    <property type="term" value="P:trans-translation"/>
    <property type="evidence" value="ECO:0007669"/>
    <property type="project" value="UniProtKB-UniRule"/>
</dbReference>
<dbReference type="CDD" id="cd09294">
    <property type="entry name" value="SmpB"/>
    <property type="match status" value="1"/>
</dbReference>
<dbReference type="Gene3D" id="2.40.280.10">
    <property type="match status" value="1"/>
</dbReference>
<dbReference type="HAMAP" id="MF_00023">
    <property type="entry name" value="SmpB"/>
    <property type="match status" value="1"/>
</dbReference>
<dbReference type="InterPro" id="IPR023620">
    <property type="entry name" value="SmpB"/>
</dbReference>
<dbReference type="InterPro" id="IPR000037">
    <property type="entry name" value="SsrA-bd_prot"/>
</dbReference>
<dbReference type="InterPro" id="IPR020081">
    <property type="entry name" value="SsrA-bd_prot_CS"/>
</dbReference>
<dbReference type="NCBIfam" id="NF003843">
    <property type="entry name" value="PRK05422.1"/>
    <property type="match status" value="1"/>
</dbReference>
<dbReference type="NCBIfam" id="TIGR00086">
    <property type="entry name" value="smpB"/>
    <property type="match status" value="1"/>
</dbReference>
<dbReference type="PANTHER" id="PTHR30308:SF2">
    <property type="entry name" value="SSRA-BINDING PROTEIN"/>
    <property type="match status" value="1"/>
</dbReference>
<dbReference type="PANTHER" id="PTHR30308">
    <property type="entry name" value="TMRNA-BINDING COMPONENT OF TRANS-TRANSLATION TAGGING COMPLEX"/>
    <property type="match status" value="1"/>
</dbReference>
<dbReference type="Pfam" id="PF01668">
    <property type="entry name" value="SmpB"/>
    <property type="match status" value="1"/>
</dbReference>
<dbReference type="SUPFAM" id="SSF74982">
    <property type="entry name" value="Small protein B (SmpB)"/>
    <property type="match status" value="1"/>
</dbReference>
<dbReference type="PROSITE" id="PS01317">
    <property type="entry name" value="SSRP"/>
    <property type="match status" value="1"/>
</dbReference>
<reference key="1">
    <citation type="submission" date="2007-04" db="EMBL/GenBank/DDBJ databases">
        <title>Complete sequence of chromosome of Rhodobacter sphaeroides ATCC 17025.</title>
        <authorList>
            <consortium name="US DOE Joint Genome Institute"/>
            <person name="Copeland A."/>
            <person name="Lucas S."/>
            <person name="Lapidus A."/>
            <person name="Barry K."/>
            <person name="Detter J.C."/>
            <person name="Glavina del Rio T."/>
            <person name="Hammon N."/>
            <person name="Israni S."/>
            <person name="Dalin E."/>
            <person name="Tice H."/>
            <person name="Pitluck S."/>
            <person name="Chertkov O."/>
            <person name="Brettin T."/>
            <person name="Bruce D."/>
            <person name="Han C."/>
            <person name="Schmutz J."/>
            <person name="Larimer F."/>
            <person name="Land M."/>
            <person name="Hauser L."/>
            <person name="Kyrpides N."/>
            <person name="Kim E."/>
            <person name="Richardson P."/>
            <person name="Mackenzie C."/>
            <person name="Choudhary M."/>
            <person name="Donohue T.J."/>
            <person name="Kaplan S."/>
        </authorList>
    </citation>
    <scope>NUCLEOTIDE SEQUENCE [LARGE SCALE GENOMIC DNA]</scope>
    <source>
        <strain>ATCC 17025 / ATH 2.4.3</strain>
    </source>
</reference>